<accession>O48659</accession>
<name>SPDS2_HYONI</name>
<keyword id="KW-0620">Polyamine biosynthesis</keyword>
<keyword id="KW-0745">Spermidine biosynthesis</keyword>
<keyword id="KW-0808">Transferase</keyword>
<feature type="chain" id="PRO_0000156454" description="Spermidine synthase 2">
    <location>
        <begin position="1"/>
        <end position="308"/>
    </location>
</feature>
<feature type="domain" description="PABS">
    <location>
        <begin position="17"/>
        <end position="254"/>
    </location>
</feature>
<feature type="active site" description="Proton acceptor" evidence="1">
    <location>
        <position position="173"/>
    </location>
</feature>
<feature type="binding site" evidence="1">
    <location>
        <position position="48"/>
    </location>
    <ligand>
        <name>S-adenosyl 3-(methylsulfanyl)propylamine</name>
        <dbReference type="ChEBI" id="CHEBI:57443"/>
    </ligand>
</feature>
<feature type="binding site" evidence="1">
    <location>
        <position position="78"/>
    </location>
    <ligand>
        <name>putrescine</name>
        <dbReference type="ChEBI" id="CHEBI:326268"/>
    </ligand>
</feature>
<feature type="binding site" evidence="1">
    <location>
        <position position="79"/>
    </location>
    <ligand>
        <name>S-adenosyl 3-(methylsulfanyl)propylamine</name>
        <dbReference type="ChEBI" id="CHEBI:57443"/>
    </ligand>
</feature>
<feature type="binding site" evidence="1">
    <location>
        <position position="103"/>
    </location>
    <ligand>
        <name>S-adenosyl 3-(methylsulfanyl)propylamine</name>
        <dbReference type="ChEBI" id="CHEBI:57443"/>
    </ligand>
</feature>
<feature type="binding site" evidence="1">
    <location>
        <position position="123"/>
    </location>
    <ligand>
        <name>S-adenosyl 3-(methylsulfanyl)propylamine</name>
        <dbReference type="ChEBI" id="CHEBI:57443"/>
    </ligand>
</feature>
<feature type="binding site" evidence="1">
    <location>
        <begin position="154"/>
        <end position="155"/>
    </location>
    <ligand>
        <name>S-adenosyl 3-(methylsulfanyl)propylamine</name>
        <dbReference type="ChEBI" id="CHEBI:57443"/>
    </ligand>
</feature>
<feature type="binding site" evidence="1">
    <location>
        <begin position="173"/>
        <end position="176"/>
    </location>
    <ligand>
        <name>putrescine</name>
        <dbReference type="ChEBI" id="CHEBI:326268"/>
    </ligand>
</feature>
<feature type="binding site" evidence="1">
    <location>
        <position position="173"/>
    </location>
    <ligand>
        <name>S-adenosyl 3-(methylsulfanyl)propylamine</name>
        <dbReference type="ChEBI" id="CHEBI:57443"/>
    </ligand>
</feature>
<feature type="binding site" evidence="1">
    <location>
        <position position="242"/>
    </location>
    <ligand>
        <name>putrescine</name>
        <dbReference type="ChEBI" id="CHEBI:326268"/>
    </ligand>
</feature>
<comment type="catalytic activity">
    <reaction>
        <text>S-adenosyl 3-(methylsulfanyl)propylamine + putrescine = S-methyl-5'-thioadenosine + spermidine + H(+)</text>
        <dbReference type="Rhea" id="RHEA:12721"/>
        <dbReference type="ChEBI" id="CHEBI:15378"/>
        <dbReference type="ChEBI" id="CHEBI:17509"/>
        <dbReference type="ChEBI" id="CHEBI:57443"/>
        <dbReference type="ChEBI" id="CHEBI:57834"/>
        <dbReference type="ChEBI" id="CHEBI:326268"/>
        <dbReference type="EC" id="2.5.1.16"/>
    </reaction>
</comment>
<comment type="pathway">
    <text>Amine and polyamine biosynthesis; spermidine biosynthesis; spermidine from putrescine: step 1/1.</text>
</comment>
<comment type="similarity">
    <text evidence="2">Belongs to the spermidine/spermine synthase family.</text>
</comment>
<sequence>MEEQGNNESAYISSILPGWFSEISPLWPGEAHSLKVEKILFQGKSDYQNVVVFQSSTYGKVLVLDGVIQLTERDECAYQEMITHLPLCSIPNPKKVLVIGGGDGGVLREVSRHSSVEQIDICEIDKMVIDVSKQFFPNVAIGYEDPRVKLHVGDGVAFLKNVPEGTYDAVIVDSSDPIGPAQELFEKPFFESVARALCPGGVVCTQAESIWLHMHIIEDIVSNCRQIFKGSVNYAWTTVPTYPSGVIGFMLCSTEGPAVDFKNPINPIDADDSHTKTRGPLKFYNSEIHSASFCLPSFAKRVIESNAK</sequence>
<evidence type="ECO:0000250" key="1"/>
<evidence type="ECO:0000305" key="2"/>
<dbReference type="EC" id="2.5.1.16"/>
<dbReference type="EMBL" id="AB006691">
    <property type="protein sequence ID" value="BAA24534.1"/>
    <property type="molecule type" value="mRNA"/>
</dbReference>
<dbReference type="SMR" id="O48659"/>
<dbReference type="UniPathway" id="UPA00248">
    <property type="reaction ID" value="UER00314"/>
</dbReference>
<dbReference type="GO" id="GO:0005829">
    <property type="term" value="C:cytosol"/>
    <property type="evidence" value="ECO:0007669"/>
    <property type="project" value="TreeGrafter"/>
</dbReference>
<dbReference type="GO" id="GO:0004766">
    <property type="term" value="F:spermidine synthase activity"/>
    <property type="evidence" value="ECO:0007669"/>
    <property type="project" value="UniProtKB-EC"/>
</dbReference>
<dbReference type="GO" id="GO:0008295">
    <property type="term" value="P:spermidine biosynthetic process"/>
    <property type="evidence" value="ECO:0007669"/>
    <property type="project" value="UniProtKB-UniPathway"/>
</dbReference>
<dbReference type="CDD" id="cd02440">
    <property type="entry name" value="AdoMet_MTases"/>
    <property type="match status" value="1"/>
</dbReference>
<dbReference type="FunFam" id="2.30.140.10:FF:000003">
    <property type="entry name" value="Spermidine synthase 1"/>
    <property type="match status" value="1"/>
</dbReference>
<dbReference type="FunFam" id="3.40.50.150:FF:000048">
    <property type="entry name" value="Spermidine synthase 1"/>
    <property type="match status" value="1"/>
</dbReference>
<dbReference type="Gene3D" id="2.30.140.10">
    <property type="entry name" value="Spermidine synthase, tetramerisation domain"/>
    <property type="match status" value="1"/>
</dbReference>
<dbReference type="Gene3D" id="3.40.50.150">
    <property type="entry name" value="Vaccinia Virus protein VP39"/>
    <property type="match status" value="1"/>
</dbReference>
<dbReference type="HAMAP" id="MF_00198">
    <property type="entry name" value="Spermidine_synth"/>
    <property type="match status" value="1"/>
</dbReference>
<dbReference type="InterPro" id="IPR030374">
    <property type="entry name" value="PABS"/>
</dbReference>
<dbReference type="InterPro" id="IPR030373">
    <property type="entry name" value="PABS_CS"/>
</dbReference>
<dbReference type="InterPro" id="IPR029063">
    <property type="entry name" value="SAM-dependent_MTases_sf"/>
</dbReference>
<dbReference type="InterPro" id="IPR001045">
    <property type="entry name" value="Spermi_synthase"/>
</dbReference>
<dbReference type="InterPro" id="IPR030668">
    <property type="entry name" value="Spermi_synthase_euk"/>
</dbReference>
<dbReference type="InterPro" id="IPR035246">
    <property type="entry name" value="Spermidine_synt_N"/>
</dbReference>
<dbReference type="InterPro" id="IPR037163">
    <property type="entry name" value="Spermidine_synt_N_sf"/>
</dbReference>
<dbReference type="NCBIfam" id="NF002010">
    <property type="entry name" value="PRK00811.1"/>
    <property type="match status" value="1"/>
</dbReference>
<dbReference type="NCBIfam" id="TIGR00417">
    <property type="entry name" value="speE"/>
    <property type="match status" value="1"/>
</dbReference>
<dbReference type="PANTHER" id="PTHR11558:SF11">
    <property type="entry name" value="SPERMIDINE SYNTHASE"/>
    <property type="match status" value="1"/>
</dbReference>
<dbReference type="PANTHER" id="PTHR11558">
    <property type="entry name" value="SPERMIDINE/SPERMINE SYNTHASE"/>
    <property type="match status" value="1"/>
</dbReference>
<dbReference type="Pfam" id="PF17284">
    <property type="entry name" value="Spermine_synt_N"/>
    <property type="match status" value="1"/>
</dbReference>
<dbReference type="Pfam" id="PF01564">
    <property type="entry name" value="Spermine_synth"/>
    <property type="match status" value="1"/>
</dbReference>
<dbReference type="PIRSF" id="PIRSF000502">
    <property type="entry name" value="Spermidine_synth"/>
    <property type="match status" value="1"/>
</dbReference>
<dbReference type="SUPFAM" id="SSF53335">
    <property type="entry name" value="S-adenosyl-L-methionine-dependent methyltransferases"/>
    <property type="match status" value="1"/>
</dbReference>
<dbReference type="PROSITE" id="PS01330">
    <property type="entry name" value="PABS_1"/>
    <property type="match status" value="1"/>
</dbReference>
<dbReference type="PROSITE" id="PS51006">
    <property type="entry name" value="PABS_2"/>
    <property type="match status" value="1"/>
</dbReference>
<protein>
    <recommendedName>
        <fullName>Spermidine synthase 2</fullName>
        <shortName>SPDSY 2</shortName>
        <ecNumber>2.5.1.16</ecNumber>
    </recommendedName>
    <alternativeName>
        <fullName>Putrescine aminopropyltransferase 2</fullName>
    </alternativeName>
</protein>
<reference key="1">
    <citation type="journal article" date="1998" name="Plant Cell Physiol.">
        <title>Molecular cloning of plant spermidine synthases.</title>
        <authorList>
            <person name="Hashimoto T."/>
            <person name="Tamaki K."/>
            <person name="Suzuki K."/>
            <person name="Yamada Y."/>
        </authorList>
    </citation>
    <scope>NUCLEOTIDE SEQUENCE [MRNA]</scope>
    <source>
        <tissue>Root</tissue>
    </source>
</reference>
<organism>
    <name type="scientific">Hyoscyamus niger</name>
    <name type="common">Black henbane</name>
    <dbReference type="NCBI Taxonomy" id="4079"/>
    <lineage>
        <taxon>Eukaryota</taxon>
        <taxon>Viridiplantae</taxon>
        <taxon>Streptophyta</taxon>
        <taxon>Embryophyta</taxon>
        <taxon>Tracheophyta</taxon>
        <taxon>Spermatophyta</taxon>
        <taxon>Magnoliopsida</taxon>
        <taxon>eudicotyledons</taxon>
        <taxon>Gunneridae</taxon>
        <taxon>Pentapetalae</taxon>
        <taxon>asterids</taxon>
        <taxon>lamiids</taxon>
        <taxon>Solanales</taxon>
        <taxon>Solanaceae</taxon>
        <taxon>Solanoideae</taxon>
        <taxon>Hyoscyameae</taxon>
        <taxon>Hyoscyamus</taxon>
    </lineage>
</organism>
<proteinExistence type="evidence at transcript level"/>